<evidence type="ECO:0000255" key="1">
    <source>
        <dbReference type="HAMAP-Rule" id="MF_00740"/>
    </source>
</evidence>
<reference key="1">
    <citation type="journal article" date="2009" name="J. Bacteriol.">
        <title>Complete genome sequence of Macrococcus caseolyticus strain JCSCS5402, reflecting the ancestral genome of the human-pathogenic staphylococci.</title>
        <authorList>
            <person name="Baba T."/>
            <person name="Kuwahara-Arai K."/>
            <person name="Uchiyama I."/>
            <person name="Takeuchi F."/>
            <person name="Ito T."/>
            <person name="Hiramatsu K."/>
        </authorList>
    </citation>
    <scope>NUCLEOTIDE SEQUENCE [LARGE SCALE GENOMIC DNA]</scope>
    <source>
        <strain>JCSC5402</strain>
    </source>
</reference>
<comment type="function">
    <text evidence="1">Isomerase that catalyzes the conversion of deoxy-ribose 1-phosphate (dRib-1-P) and ribose 1-phosphate (Rib-1-P) to deoxy-ribose 5-phosphate (dRib-5-P) and ribose 5-phosphate (Rib-5-P), respectively.</text>
</comment>
<comment type="catalytic activity">
    <reaction evidence="1">
        <text>2-deoxy-alpha-D-ribose 1-phosphate = 2-deoxy-D-ribose 5-phosphate</text>
        <dbReference type="Rhea" id="RHEA:27658"/>
        <dbReference type="ChEBI" id="CHEBI:57259"/>
        <dbReference type="ChEBI" id="CHEBI:62877"/>
        <dbReference type="EC" id="5.4.2.7"/>
    </reaction>
</comment>
<comment type="catalytic activity">
    <reaction evidence="1">
        <text>alpha-D-ribose 1-phosphate = D-ribose 5-phosphate</text>
        <dbReference type="Rhea" id="RHEA:18793"/>
        <dbReference type="ChEBI" id="CHEBI:57720"/>
        <dbReference type="ChEBI" id="CHEBI:78346"/>
        <dbReference type="EC" id="5.4.2.7"/>
    </reaction>
</comment>
<comment type="cofactor">
    <cofactor evidence="1">
        <name>Mn(2+)</name>
        <dbReference type="ChEBI" id="CHEBI:29035"/>
    </cofactor>
    <text evidence="1">Binds 2 manganese ions.</text>
</comment>
<comment type="pathway">
    <text evidence="1">Carbohydrate degradation; 2-deoxy-D-ribose 1-phosphate degradation; D-glyceraldehyde 3-phosphate and acetaldehyde from 2-deoxy-alpha-D-ribose 1-phosphate: step 1/2.</text>
</comment>
<comment type="subcellular location">
    <subcellularLocation>
        <location evidence="1">Cytoplasm</location>
    </subcellularLocation>
</comment>
<comment type="similarity">
    <text evidence="1">Belongs to the phosphopentomutase family.</text>
</comment>
<accession>B9E8I3</accession>
<dbReference type="EC" id="5.4.2.7" evidence="1"/>
<dbReference type="EMBL" id="AP009484">
    <property type="protein sequence ID" value="BAH18501.1"/>
    <property type="molecule type" value="Genomic_DNA"/>
</dbReference>
<dbReference type="RefSeq" id="WP_015912293.1">
    <property type="nucleotide sequence ID" value="NC_011999.1"/>
</dbReference>
<dbReference type="SMR" id="B9E8I3"/>
<dbReference type="STRING" id="458233.MCCL_1794"/>
<dbReference type="GeneID" id="61130174"/>
<dbReference type="KEGG" id="mcl:MCCL_1794"/>
<dbReference type="eggNOG" id="COG1015">
    <property type="taxonomic scope" value="Bacteria"/>
</dbReference>
<dbReference type="HOGENOM" id="CLU_053861_0_0_9"/>
<dbReference type="OrthoDB" id="9769930at2"/>
<dbReference type="UniPathway" id="UPA00002">
    <property type="reaction ID" value="UER00467"/>
</dbReference>
<dbReference type="Proteomes" id="UP000001383">
    <property type="component" value="Chromosome"/>
</dbReference>
<dbReference type="GO" id="GO:0005829">
    <property type="term" value="C:cytosol"/>
    <property type="evidence" value="ECO:0007669"/>
    <property type="project" value="TreeGrafter"/>
</dbReference>
<dbReference type="GO" id="GO:0000287">
    <property type="term" value="F:magnesium ion binding"/>
    <property type="evidence" value="ECO:0007669"/>
    <property type="project" value="InterPro"/>
</dbReference>
<dbReference type="GO" id="GO:0030145">
    <property type="term" value="F:manganese ion binding"/>
    <property type="evidence" value="ECO:0007669"/>
    <property type="project" value="UniProtKB-UniRule"/>
</dbReference>
<dbReference type="GO" id="GO:0008973">
    <property type="term" value="F:phosphopentomutase activity"/>
    <property type="evidence" value="ECO:0007669"/>
    <property type="project" value="UniProtKB-UniRule"/>
</dbReference>
<dbReference type="GO" id="GO:0006018">
    <property type="term" value="P:2-deoxyribose 1-phosphate catabolic process"/>
    <property type="evidence" value="ECO:0007669"/>
    <property type="project" value="UniProtKB-UniRule"/>
</dbReference>
<dbReference type="GO" id="GO:0006015">
    <property type="term" value="P:5-phosphoribose 1-diphosphate biosynthetic process"/>
    <property type="evidence" value="ECO:0007669"/>
    <property type="project" value="UniProtKB-UniPathway"/>
</dbReference>
<dbReference type="GO" id="GO:0043094">
    <property type="term" value="P:metabolic compound salvage"/>
    <property type="evidence" value="ECO:0007669"/>
    <property type="project" value="InterPro"/>
</dbReference>
<dbReference type="GO" id="GO:0009117">
    <property type="term" value="P:nucleotide metabolic process"/>
    <property type="evidence" value="ECO:0007669"/>
    <property type="project" value="InterPro"/>
</dbReference>
<dbReference type="CDD" id="cd16009">
    <property type="entry name" value="PPM"/>
    <property type="match status" value="1"/>
</dbReference>
<dbReference type="FunFam" id="3.30.70.1250:FF:000001">
    <property type="entry name" value="Phosphopentomutase"/>
    <property type="match status" value="1"/>
</dbReference>
<dbReference type="Gene3D" id="3.40.720.10">
    <property type="entry name" value="Alkaline Phosphatase, subunit A"/>
    <property type="match status" value="1"/>
</dbReference>
<dbReference type="Gene3D" id="3.30.70.1250">
    <property type="entry name" value="Phosphopentomutase"/>
    <property type="match status" value="1"/>
</dbReference>
<dbReference type="HAMAP" id="MF_00740">
    <property type="entry name" value="Phosphopentomut"/>
    <property type="match status" value="1"/>
</dbReference>
<dbReference type="InterPro" id="IPR017850">
    <property type="entry name" value="Alkaline_phosphatase_core_sf"/>
</dbReference>
<dbReference type="InterPro" id="IPR010045">
    <property type="entry name" value="DeoB"/>
</dbReference>
<dbReference type="InterPro" id="IPR006124">
    <property type="entry name" value="Metalloenzyme"/>
</dbReference>
<dbReference type="InterPro" id="IPR024052">
    <property type="entry name" value="Phosphopentomutase_DeoB_cap_sf"/>
</dbReference>
<dbReference type="NCBIfam" id="TIGR01696">
    <property type="entry name" value="deoB"/>
    <property type="match status" value="1"/>
</dbReference>
<dbReference type="NCBIfam" id="NF003766">
    <property type="entry name" value="PRK05362.1"/>
    <property type="match status" value="1"/>
</dbReference>
<dbReference type="PANTHER" id="PTHR21110">
    <property type="entry name" value="PHOSPHOPENTOMUTASE"/>
    <property type="match status" value="1"/>
</dbReference>
<dbReference type="PANTHER" id="PTHR21110:SF0">
    <property type="entry name" value="PHOSPHOPENTOMUTASE"/>
    <property type="match status" value="1"/>
</dbReference>
<dbReference type="Pfam" id="PF01676">
    <property type="entry name" value="Metalloenzyme"/>
    <property type="match status" value="1"/>
</dbReference>
<dbReference type="PIRSF" id="PIRSF001491">
    <property type="entry name" value="Ppentomutase"/>
    <property type="match status" value="1"/>
</dbReference>
<dbReference type="SUPFAM" id="SSF53649">
    <property type="entry name" value="Alkaline phosphatase-like"/>
    <property type="match status" value="1"/>
</dbReference>
<dbReference type="SUPFAM" id="SSF143856">
    <property type="entry name" value="DeoB insert domain-like"/>
    <property type="match status" value="1"/>
</dbReference>
<name>DEOB_MACCJ</name>
<protein>
    <recommendedName>
        <fullName evidence="1">Phosphopentomutase</fullName>
        <ecNumber evidence="1">5.4.2.7</ecNumber>
    </recommendedName>
    <alternativeName>
        <fullName evidence="1">Phosphodeoxyribomutase</fullName>
    </alternativeName>
</protein>
<feature type="chain" id="PRO_1000212812" description="Phosphopentomutase">
    <location>
        <begin position="1"/>
        <end position="390"/>
    </location>
</feature>
<feature type="binding site" evidence="1">
    <location>
        <position position="12"/>
    </location>
    <ligand>
        <name>Mn(2+)</name>
        <dbReference type="ChEBI" id="CHEBI:29035"/>
        <label>1</label>
    </ligand>
</feature>
<feature type="binding site" evidence="1">
    <location>
        <position position="284"/>
    </location>
    <ligand>
        <name>Mn(2+)</name>
        <dbReference type="ChEBI" id="CHEBI:29035"/>
        <label>2</label>
    </ligand>
</feature>
<feature type="binding site" evidence="1">
    <location>
        <position position="289"/>
    </location>
    <ligand>
        <name>Mn(2+)</name>
        <dbReference type="ChEBI" id="CHEBI:29035"/>
        <label>2</label>
    </ligand>
</feature>
<feature type="binding site" evidence="1">
    <location>
        <position position="325"/>
    </location>
    <ligand>
        <name>Mn(2+)</name>
        <dbReference type="ChEBI" id="CHEBI:29035"/>
        <label>1</label>
    </ligand>
</feature>
<feature type="binding site" evidence="1">
    <location>
        <position position="326"/>
    </location>
    <ligand>
        <name>Mn(2+)</name>
        <dbReference type="ChEBI" id="CHEBI:29035"/>
        <label>1</label>
    </ligand>
</feature>
<feature type="binding site" evidence="1">
    <location>
        <position position="337"/>
    </location>
    <ligand>
        <name>Mn(2+)</name>
        <dbReference type="ChEBI" id="CHEBI:29035"/>
        <label>2</label>
    </ligand>
</feature>
<proteinExistence type="inferred from homology"/>
<sequence length="390" mass="43466">MTFKRVHLIVMDSVGIGEAPDAEKFGDAGSHTLKHTLEGFEGKLPNLEKLGLGNIAPLPVVNKVDKPEAYYTKLSEASVGKDTMTGHWEIMGLNIDQPFKVYPDGFPEELVTAIEEMTGRKVVANKPASGTAIIDEWGAHQMETGDLIVYTSADPVLQIAAHEEIIPLEELYEICEKVREYTKDPKYLIGRIIARPYVGEPGNFTRTSNRHDYALKPFGRTVMNELQDAGRDVIAIGKINDIYDGEGVTKSIRTKDNMDGMDKLLEVVKSDFDGLSFLNLVDFDALYGHRRDKEGYMNAIKAFDDRLGELLEALREDDLLIITADHGNDPTMPGTDHTREYVPLLMYSKQFDSGRELESHTTFASIGATIADNFGVELPEFGKSYLEELK</sequence>
<gene>
    <name evidence="1" type="primary">deoB</name>
    <name type="ordered locus">MCCL_1794</name>
</gene>
<organism>
    <name type="scientific">Macrococcus caseolyticus (strain JCSC5402)</name>
    <name type="common">Macrococcoides caseolyticum</name>
    <dbReference type="NCBI Taxonomy" id="458233"/>
    <lineage>
        <taxon>Bacteria</taxon>
        <taxon>Bacillati</taxon>
        <taxon>Bacillota</taxon>
        <taxon>Bacilli</taxon>
        <taxon>Bacillales</taxon>
        <taxon>Staphylococcaceae</taxon>
        <taxon>Macrococcoides</taxon>
    </lineage>
</organism>
<keyword id="KW-0963">Cytoplasm</keyword>
<keyword id="KW-0413">Isomerase</keyword>
<keyword id="KW-0464">Manganese</keyword>
<keyword id="KW-0479">Metal-binding</keyword>
<keyword id="KW-1185">Reference proteome</keyword>